<comment type="function">
    <text evidence="3 4">A methylase that recognizes DNA with the sequence 5'-GCGTC-3', methylates C-2, and protects the DNA from cleavage by the HgaI endonuclease.</text>
</comment>
<comment type="catalytic activity">
    <reaction evidence="2 3">
        <text>a 2'-deoxycytidine in DNA + S-adenosyl-L-methionine = a 5-methyl-2'-deoxycytidine in DNA + S-adenosyl-L-homocysteine + H(+)</text>
        <dbReference type="Rhea" id="RHEA:13681"/>
        <dbReference type="Rhea" id="RHEA-COMP:11369"/>
        <dbReference type="Rhea" id="RHEA-COMP:11370"/>
        <dbReference type="ChEBI" id="CHEBI:15378"/>
        <dbReference type="ChEBI" id="CHEBI:57856"/>
        <dbReference type="ChEBI" id="CHEBI:59789"/>
        <dbReference type="ChEBI" id="CHEBI:85452"/>
        <dbReference type="ChEBI" id="CHEBI:85454"/>
        <dbReference type="EC" id="2.1.1.37"/>
    </reaction>
</comment>
<comment type="miscellaneous">
    <text evidence="3">The HgaI modification system consists of two cytosine methylase genes responsible for modification of different strands in the target DNA.</text>
</comment>
<comment type="similarity">
    <text evidence="1">Belongs to the class I-like SAM-binding methyltransferase superfamily. C5-methyltransferase family.</text>
</comment>
<comment type="sequence caution" evidence="6">
    <conflict type="erroneous initiation">
        <sequence resource="EMBL-CDS" id="BAA04206"/>
    </conflict>
    <text>Extended N-terminus.</text>
</comment>
<comment type="sequence caution" evidence="6">
    <conflict type="erroneous initiation">
        <sequence resource="EMBL-CDS" id="BAA14377"/>
    </conflict>
    <text>Extended N-terminus.</text>
</comment>
<reference key="1">
    <citation type="journal article" date="1991" name="J. Biol. Chem.">
        <title>The HgaI restriction-modification system contains two cytosine methylase genes responsible for modification of different DNA strands.</title>
        <authorList>
            <person name="Sugisaki H."/>
            <person name="Yamamoto K."/>
            <person name="Takanami M."/>
        </authorList>
    </citation>
    <scope>NUCLEOTIDE SEQUENCE [GENOMIC DNA]</scope>
    <scope>FUNCTION</scope>
    <scope>CATALYTIC ACTIVITY</scope>
    <source>
        <strain>ATCC 14385 / DSM 22841 / CCUG 3713 / NCTC 3438 / Lovell 6</strain>
    </source>
</reference>
<reference key="2">
    <citation type="journal article" date="1993" name="Bull. Inst. Chem. Res., Kyoto Univ.">
        <title>Nucleotide sequence of the gene of HgaI restriction endonuclease.</title>
        <authorList>
            <person name="Sugisaki H."/>
        </authorList>
    </citation>
    <scope>NUCLEOTIDE SEQUENCE [GENOMIC DNA]</scope>
    <source>
        <strain>ATCC 14385 / DSM 22841 / CCUG 3713 / NCTC 3438 / Lovell 6</strain>
    </source>
</reference>
<reference key="3">
    <citation type="journal article" date="2003" name="Nucleic Acids Res.">
        <title>A nomenclature for restriction enzymes, DNA methyltransferases, homing endonucleases and their genes.</title>
        <authorList>
            <person name="Roberts R.J."/>
            <person name="Belfort M."/>
            <person name="Bestor T."/>
            <person name="Bhagwat A.S."/>
            <person name="Bickle T.A."/>
            <person name="Bitinaite J."/>
            <person name="Blumenthal R.M."/>
            <person name="Degtyarev S.K."/>
            <person name="Dryden D.T."/>
            <person name="Dybvig K."/>
            <person name="Firman K."/>
            <person name="Gromova E.S."/>
            <person name="Gumport R.I."/>
            <person name="Halford S.E."/>
            <person name="Hattman S."/>
            <person name="Heitman J."/>
            <person name="Hornby D.P."/>
            <person name="Janulaitis A."/>
            <person name="Jeltsch A."/>
            <person name="Josephsen J."/>
            <person name="Kiss A."/>
            <person name="Klaenhammer T.R."/>
            <person name="Kobayashi I."/>
            <person name="Kong H."/>
            <person name="Krueger D.H."/>
            <person name="Lacks S."/>
            <person name="Marinus M.G."/>
            <person name="Miyahara M."/>
            <person name="Morgan R.D."/>
            <person name="Murray N.E."/>
            <person name="Nagaraja V."/>
            <person name="Piekarowicz A."/>
            <person name="Pingoud A."/>
            <person name="Raleigh E."/>
            <person name="Rao D.N."/>
            <person name="Reich N."/>
            <person name="Repin V.E."/>
            <person name="Selker E.U."/>
            <person name="Shaw P.C."/>
            <person name="Stein D.C."/>
            <person name="Stoddard B.L."/>
            <person name="Szybalski W."/>
            <person name="Trautner T.A."/>
            <person name="Van Etten J.L."/>
            <person name="Vitor J.M."/>
            <person name="Wilson G.G."/>
            <person name="Xu S.Y."/>
        </authorList>
    </citation>
    <scope>NOMENCLATURE</scope>
</reference>
<organism>
    <name type="scientific">Avibacterium volantium</name>
    <name type="common">Pasteurella volantium</name>
    <dbReference type="NCBI Taxonomy" id="762"/>
    <lineage>
        <taxon>Bacteria</taxon>
        <taxon>Pseudomonadati</taxon>
        <taxon>Pseudomonadota</taxon>
        <taxon>Gammaproteobacteria</taxon>
        <taxon>Pasteurellales</taxon>
        <taxon>Pasteurellaceae</taxon>
        <taxon>Avibacterium</taxon>
    </lineage>
</organism>
<protein>
    <recommendedName>
        <fullName evidence="4">Type II methyltransferase M1.HgaI</fullName>
        <shortName evidence="4">M1.HgaI</shortName>
        <ecNumber evidence="3">2.1.1.37</ecNumber>
    </recommendedName>
    <alternativeName>
        <fullName>Cytosine-specific methyltransferase HgaIA</fullName>
    </alternativeName>
    <alternativeName>
        <fullName evidence="5">M.HgaI-1</fullName>
    </alternativeName>
    <alternativeName>
        <fullName>Modification methylase HgaIA</fullName>
        <shortName>M.HgaIA</shortName>
    </alternativeName>
</protein>
<gene>
    <name type="primary">hgaIAM</name>
</gene>
<accession>P25282</accession>
<name>MTG1_AVIVO</name>
<sequence length="357" mass="40863">MKKNIMGLSLFSSAGIGEYFLSRVGIDIIVANELIKKRADLYQKIYPNHKMVIGDIRDQRIFNKVLNIALTNQVDFLIASPPCQGMSVAGKNRDVSNMANDNRNYLIMYVIAMIKKLKPAYILIENVPFLLKLELYIDNKLTPIKNILEDEFGSEYHIHFDILDAADYGTPQRRKRAIIRLNKKGTIWNLPLKQNIVSVEQAIGNLPSIESGKHSGLKWHYGRGHTEQQIEWMKHTPTGKSAFENLVHYPRKANGEKVKGYHSSYRRIRWDEPAPTITIRNDAISSQRNVHPGRPLLDGTYSDARVLSVLELMRLTGLPDNWEIPDDTPEILIRQIIGECIPPLLIENITREIFNEN</sequence>
<feature type="chain" id="PRO_0000087879" description="Type II methyltransferase M1.HgaI">
    <location>
        <begin position="1"/>
        <end position="357"/>
    </location>
</feature>
<feature type="domain" description="SAM-dependent MTase C5-type" evidence="1">
    <location>
        <begin position="5"/>
        <end position="357"/>
    </location>
</feature>
<feature type="active site" evidence="1 2">
    <location>
        <position position="83"/>
    </location>
</feature>
<keyword id="KW-0238">DNA-binding</keyword>
<keyword id="KW-0489">Methyltransferase</keyword>
<keyword id="KW-0680">Restriction system</keyword>
<keyword id="KW-0949">S-adenosyl-L-methionine</keyword>
<keyword id="KW-0808">Transferase</keyword>
<evidence type="ECO:0000255" key="1">
    <source>
        <dbReference type="PROSITE-ProRule" id="PRU01016"/>
    </source>
</evidence>
<evidence type="ECO:0000255" key="2">
    <source>
        <dbReference type="PROSITE-ProRule" id="PRU10018"/>
    </source>
</evidence>
<evidence type="ECO:0000269" key="3">
    <source>
    </source>
</evidence>
<evidence type="ECO:0000303" key="4">
    <source>
    </source>
</evidence>
<evidence type="ECO:0000303" key="5">
    <source>
    </source>
</evidence>
<evidence type="ECO:0000305" key="6"/>
<proteinExistence type="evidence at protein level"/>
<dbReference type="EC" id="2.1.1.37" evidence="3"/>
<dbReference type="EMBL" id="D90363">
    <property type="protein sequence ID" value="BAA14377.1"/>
    <property type="status" value="ALT_INIT"/>
    <property type="molecule type" value="Genomic_DNA"/>
</dbReference>
<dbReference type="EMBL" id="D17388">
    <property type="protein sequence ID" value="BAA04206.1"/>
    <property type="status" value="ALT_INIT"/>
    <property type="molecule type" value="Genomic_DNA"/>
</dbReference>
<dbReference type="PIR" id="B39467">
    <property type="entry name" value="B39467"/>
</dbReference>
<dbReference type="RefSeq" id="WP_126371592.1">
    <property type="nucleotide sequence ID" value="NZ_LR134167.1"/>
</dbReference>
<dbReference type="SMR" id="P25282"/>
<dbReference type="OrthoDB" id="9813719at2"/>
<dbReference type="PRO" id="PR:P25282"/>
<dbReference type="GO" id="GO:0003886">
    <property type="term" value="F:DNA (cytosine-5-)-methyltransferase activity"/>
    <property type="evidence" value="ECO:0007669"/>
    <property type="project" value="UniProtKB-EC"/>
</dbReference>
<dbReference type="GO" id="GO:0003677">
    <property type="term" value="F:DNA binding"/>
    <property type="evidence" value="ECO:0007669"/>
    <property type="project" value="UniProtKB-KW"/>
</dbReference>
<dbReference type="GO" id="GO:0009307">
    <property type="term" value="P:DNA restriction-modification system"/>
    <property type="evidence" value="ECO:0007669"/>
    <property type="project" value="UniProtKB-KW"/>
</dbReference>
<dbReference type="GO" id="GO:0032259">
    <property type="term" value="P:methylation"/>
    <property type="evidence" value="ECO:0007669"/>
    <property type="project" value="UniProtKB-KW"/>
</dbReference>
<dbReference type="CDD" id="cd00315">
    <property type="entry name" value="Cyt_C5_DNA_methylase"/>
    <property type="match status" value="1"/>
</dbReference>
<dbReference type="Gene3D" id="3.90.120.10">
    <property type="entry name" value="DNA Methylase, subunit A, domain 2"/>
    <property type="match status" value="1"/>
</dbReference>
<dbReference type="Gene3D" id="3.40.50.150">
    <property type="entry name" value="Vaccinia Virus protein VP39"/>
    <property type="match status" value="1"/>
</dbReference>
<dbReference type="InterPro" id="IPR050390">
    <property type="entry name" value="C5-Methyltransferase"/>
</dbReference>
<dbReference type="InterPro" id="IPR018117">
    <property type="entry name" value="C5_DNA_meth_AS"/>
</dbReference>
<dbReference type="InterPro" id="IPR001525">
    <property type="entry name" value="C5_MeTfrase"/>
</dbReference>
<dbReference type="InterPro" id="IPR029063">
    <property type="entry name" value="SAM-dependent_MTases_sf"/>
</dbReference>
<dbReference type="NCBIfam" id="TIGR00675">
    <property type="entry name" value="dcm"/>
    <property type="match status" value="1"/>
</dbReference>
<dbReference type="PANTHER" id="PTHR10629">
    <property type="entry name" value="CYTOSINE-SPECIFIC METHYLTRANSFERASE"/>
    <property type="match status" value="1"/>
</dbReference>
<dbReference type="PANTHER" id="PTHR10629:SF52">
    <property type="entry name" value="DNA (CYTOSINE-5)-METHYLTRANSFERASE 1"/>
    <property type="match status" value="1"/>
</dbReference>
<dbReference type="Pfam" id="PF00145">
    <property type="entry name" value="DNA_methylase"/>
    <property type="match status" value="1"/>
</dbReference>
<dbReference type="SUPFAM" id="SSF53335">
    <property type="entry name" value="S-adenosyl-L-methionine-dependent methyltransferases"/>
    <property type="match status" value="1"/>
</dbReference>
<dbReference type="PROSITE" id="PS00094">
    <property type="entry name" value="C5_MTASE_1"/>
    <property type="match status" value="1"/>
</dbReference>
<dbReference type="PROSITE" id="PS51679">
    <property type="entry name" value="SAM_MT_C5"/>
    <property type="match status" value="1"/>
</dbReference>